<accession>P0DSO4</accession>
<sequence>KKDGYPVEGDNCAFVCFGYDNAYCDKLCKDKKADSGYCYWVHILCYCYGLPDKEPTKTNGRCKPGKK</sequence>
<reference key="1">
    <citation type="journal article" date="2015" name="Toxicon">
        <title>General characterization of Tityus fasciolatus scorpion venom. Molecular identification of toxins and localization of linear B-cell epitopes.</title>
        <authorList>
            <person name="Mendes T.M."/>
            <person name="Guimaraes-Okamoto P.T."/>
            <person name="Machado-de-Avila R.A."/>
            <person name="Oliveira D."/>
            <person name="Melo M.M."/>
            <person name="Lobato Z.I."/>
            <person name="Kalapothakis E."/>
            <person name="Chavez-Olortegui C."/>
        </authorList>
    </citation>
    <scope>NUCLEOTIDE SEQUENCE [MRNA]</scope>
    <source>
        <tissue>Venom gland</tissue>
    </source>
</reference>
<dbReference type="SMR" id="P0DSO4"/>
<dbReference type="GO" id="GO:0005576">
    <property type="term" value="C:extracellular region"/>
    <property type="evidence" value="ECO:0007669"/>
    <property type="project" value="UniProtKB-SubCell"/>
</dbReference>
<dbReference type="GO" id="GO:0019871">
    <property type="term" value="F:sodium channel inhibitor activity"/>
    <property type="evidence" value="ECO:0007669"/>
    <property type="project" value="InterPro"/>
</dbReference>
<dbReference type="GO" id="GO:0090729">
    <property type="term" value="F:toxin activity"/>
    <property type="evidence" value="ECO:0007669"/>
    <property type="project" value="UniProtKB-KW"/>
</dbReference>
<dbReference type="GO" id="GO:0006952">
    <property type="term" value="P:defense response"/>
    <property type="evidence" value="ECO:0007669"/>
    <property type="project" value="InterPro"/>
</dbReference>
<dbReference type="CDD" id="cd23106">
    <property type="entry name" value="neurotoxins_LC_scorpion"/>
    <property type="match status" value="1"/>
</dbReference>
<dbReference type="Gene3D" id="3.30.30.10">
    <property type="entry name" value="Knottin, scorpion toxin-like"/>
    <property type="match status" value="1"/>
</dbReference>
<dbReference type="InterPro" id="IPR044062">
    <property type="entry name" value="LCN-type_CS_alpha_beta_dom"/>
</dbReference>
<dbReference type="InterPro" id="IPR003614">
    <property type="entry name" value="Scorpion_toxin-like"/>
</dbReference>
<dbReference type="InterPro" id="IPR036574">
    <property type="entry name" value="Scorpion_toxin-like_sf"/>
</dbReference>
<dbReference type="InterPro" id="IPR018218">
    <property type="entry name" value="Scorpion_toxinL"/>
</dbReference>
<dbReference type="InterPro" id="IPR002061">
    <property type="entry name" value="Scorpion_toxinL/defensin"/>
</dbReference>
<dbReference type="Pfam" id="PF00537">
    <property type="entry name" value="Toxin_3"/>
    <property type="match status" value="1"/>
</dbReference>
<dbReference type="PRINTS" id="PR00285">
    <property type="entry name" value="SCORPNTOXIN"/>
</dbReference>
<dbReference type="SMART" id="SM00505">
    <property type="entry name" value="Knot1"/>
    <property type="match status" value="1"/>
</dbReference>
<dbReference type="SUPFAM" id="SSF57095">
    <property type="entry name" value="Scorpion toxin-like"/>
    <property type="match status" value="1"/>
</dbReference>
<dbReference type="PROSITE" id="PS51863">
    <property type="entry name" value="LCN_CSAB"/>
    <property type="match status" value="1"/>
</dbReference>
<evidence type="ECO:0000250" key="1">
    <source>
        <dbReference type="UniProtKB" id="P01484"/>
    </source>
</evidence>
<evidence type="ECO:0000250" key="2">
    <source>
        <dbReference type="UniProtKB" id="P01496"/>
    </source>
</evidence>
<evidence type="ECO:0000255" key="3">
    <source>
        <dbReference type="PROSITE-ProRule" id="PRU01210"/>
    </source>
</evidence>
<evidence type="ECO:0000305" key="4"/>
<evidence type="ECO:0000305" key="5">
    <source>
    </source>
</evidence>
<comment type="function">
    <text evidence="2">Alpha toxins bind voltage-independently at site-3 of sodium channels (Nav) and inhibit the inactivation of the activated channels, thereby blocking neuronal transmission.</text>
</comment>
<comment type="subcellular location">
    <subcellularLocation>
        <location evidence="5">Secreted</location>
    </subcellularLocation>
</comment>
<comment type="tissue specificity">
    <text evidence="5">Expressed by the venom gland.</text>
</comment>
<comment type="domain">
    <text evidence="4">Has the structural arrangement of an alpha-helix connected to antiparallel beta-sheets by disulfide bonds (CS-alpha/beta).</text>
</comment>
<comment type="similarity">
    <text evidence="4">Belongs to the long (4 C-C) scorpion toxin superfamily. Sodium channel inhibitor family. Alpha subfamily.</text>
</comment>
<feature type="chain" id="PRO_0000447417" description="Alpha-toxin Tf3" evidence="5">
    <location>
        <begin position="1"/>
        <end position="64"/>
    </location>
</feature>
<feature type="domain" description="LCN-type CS-alpha/beta" evidence="3">
    <location>
        <begin position="2"/>
        <end position="63"/>
    </location>
</feature>
<feature type="modified residue" description="Proline amide" evidence="1">
    <location>
        <position position="64"/>
    </location>
</feature>
<feature type="disulfide bond" evidence="3">
    <location>
        <begin position="12"/>
        <end position="62"/>
    </location>
</feature>
<feature type="disulfide bond" evidence="3">
    <location>
        <begin position="16"/>
        <end position="38"/>
    </location>
</feature>
<feature type="disulfide bond" evidence="3">
    <location>
        <begin position="24"/>
        <end position="45"/>
    </location>
</feature>
<feature type="disulfide bond" evidence="3">
    <location>
        <begin position="28"/>
        <end position="47"/>
    </location>
</feature>
<protein>
    <recommendedName>
        <fullName evidence="5">Alpha-toxin Tf3</fullName>
    </recommendedName>
</protein>
<organism>
    <name type="scientific">Tityus fasciolatus</name>
    <name type="common">Central Brazilian scorpion</name>
    <dbReference type="NCBI Taxonomy" id="203543"/>
    <lineage>
        <taxon>Eukaryota</taxon>
        <taxon>Metazoa</taxon>
        <taxon>Ecdysozoa</taxon>
        <taxon>Arthropoda</taxon>
        <taxon>Chelicerata</taxon>
        <taxon>Arachnida</taxon>
        <taxon>Scorpiones</taxon>
        <taxon>Buthida</taxon>
        <taxon>Buthoidea</taxon>
        <taxon>Buthidae</taxon>
        <taxon>Tityus</taxon>
    </lineage>
</organism>
<proteinExistence type="inferred from homology"/>
<keyword id="KW-0027">Amidation</keyword>
<keyword id="KW-1015">Disulfide bond</keyword>
<keyword id="KW-0872">Ion channel impairing toxin</keyword>
<keyword id="KW-0528">Neurotoxin</keyword>
<keyword id="KW-0964">Secreted</keyword>
<keyword id="KW-0800">Toxin</keyword>
<keyword id="KW-0738">Voltage-gated sodium channel impairing toxin</keyword>
<name>SCX3_TITFA</name>